<evidence type="ECO:0000250" key="1"/>
<evidence type="ECO:0000250" key="2">
    <source>
        <dbReference type="UniProtKB" id="Q9BR61"/>
    </source>
</evidence>
<evidence type="ECO:0000255" key="3">
    <source>
        <dbReference type="PROSITE-ProRule" id="PRU00573"/>
    </source>
</evidence>
<evidence type="ECO:0000256" key="4">
    <source>
        <dbReference type="SAM" id="MobiDB-lite"/>
    </source>
</evidence>
<evidence type="ECO:0000269" key="5">
    <source>
    </source>
</evidence>
<accession>Q66JD7</accession>
<feature type="chain" id="PRO_0000232884" description="Acyl-CoA-binding domain-containing protein 6">
    <location>
        <begin position="1"/>
        <end position="286"/>
    </location>
</feature>
<feature type="domain" description="ACB" evidence="3">
    <location>
        <begin position="32"/>
        <end position="117"/>
    </location>
</feature>
<feature type="repeat" description="ANK 1">
    <location>
        <begin position="182"/>
        <end position="211"/>
    </location>
</feature>
<feature type="repeat" description="ANK 2">
    <location>
        <begin position="215"/>
        <end position="244"/>
    </location>
</feature>
<feature type="region of interest" description="Disordered" evidence="4">
    <location>
        <begin position="1"/>
        <end position="24"/>
    </location>
</feature>
<feature type="compositionally biased region" description="Low complexity" evidence="4">
    <location>
        <begin position="8"/>
        <end position="22"/>
    </location>
</feature>
<feature type="binding site" evidence="1">
    <location>
        <begin position="59"/>
        <end position="63"/>
    </location>
    <ligand>
        <name>an acyl-CoA</name>
        <dbReference type="ChEBI" id="CHEBI:58342"/>
    </ligand>
</feature>
<feature type="binding site" evidence="1">
    <location>
        <position position="85"/>
    </location>
    <ligand>
        <name>an acyl-CoA</name>
        <dbReference type="ChEBI" id="CHEBI:58342"/>
    </ligand>
</feature>
<feature type="binding site" evidence="1">
    <location>
        <position position="104"/>
    </location>
    <ligand>
        <name>an acyl-CoA</name>
        <dbReference type="ChEBI" id="CHEBI:58342"/>
    </ligand>
</feature>
<proteinExistence type="evidence at transcript level"/>
<sequence length="286" mass="31972">MASPGVLEESSSGEACSGGCPEQWDEKTEEELQGQFEQAAKHVQNVASVASTEQLLFLYARYKQVKVGRCNTPKPGFFDYEGKKKWEAWKALGDYSCQQAMNEYIETVKKLDPDWSPQALEEPHKEPKTTFGGPVVSCLYKVQETLREEDKDIFDYCRENNISRVSHALSTGAIDVNVADDEGRCLLHWACDRGHTQLVSVLLFHNAHINMQDSEGQTPLHYASACEFPDIVDLLLDHGADPSLVDNDGFQPHEVTDSKNIAAMLQQHASYGEHNKPASLLLEMPQ</sequence>
<gene>
    <name type="primary">acbd6</name>
</gene>
<reference key="1">
    <citation type="submission" date="2004-08" db="EMBL/GenBank/DDBJ databases">
        <authorList>
            <consortium name="NIH - Xenopus Gene Collection (XGC) project"/>
        </authorList>
    </citation>
    <scope>NUCLEOTIDE SEQUENCE [LARGE SCALE MRNA]</scope>
    <source>
        <tissue>Embryo</tissue>
    </source>
</reference>
<reference key="2">
    <citation type="journal article" date="2024" name="Brain">
        <title>Bi-allelic ACBD6 variants lead to a neurodevelopmental syndrome with progressive and complex movement disorders.</title>
        <authorList>
            <person name="Kaiyrzhanov R."/>
            <person name="Rad A."/>
            <person name="Lin S.J."/>
            <person name="Bertoli-Avella A."/>
            <person name="Kallemeijn W.W."/>
            <person name="Godwin A."/>
            <person name="Zaki M.S."/>
            <person name="Huang K."/>
            <person name="Lau T."/>
            <person name="Petree C."/>
            <person name="Efthymiou S."/>
            <person name="Karimiani E.G."/>
            <person name="Hempel M."/>
            <person name="Normand E.A."/>
            <person name="Rudnik-Schoeneborn S."/>
            <person name="Schatz U.A."/>
            <person name="Baggelaar M.P."/>
            <person name="Ilyas M."/>
            <person name="Sultan T."/>
            <person name="Alvi J.R."/>
            <person name="Ganieva M."/>
            <person name="Fowler B."/>
            <person name="Aanicai R."/>
            <person name="Tayfun G.A."/>
            <person name="Al Saman A."/>
            <person name="Alswaid A."/>
            <person name="Amiri N."/>
            <person name="Asilova N."/>
            <person name="Shotelersuk V."/>
            <person name="Yeetong P."/>
            <person name="Azam M."/>
            <person name="Babaei M."/>
            <person name="Monajemi G.B."/>
            <person name="Mohammadi P."/>
            <person name="Samie S."/>
            <person name="Banu S.H."/>
            <person name="Pinto Basto J."/>
            <person name="Kortuem F."/>
            <person name="Bauer M."/>
            <person name="Bauer P."/>
            <person name="Beetz C."/>
            <person name="Garshasbi M."/>
            <person name="Issa A.H."/>
            <person name="Eyaid W."/>
            <person name="Ahmed H."/>
            <person name="Hashemi N."/>
            <person name="Hassanpour K."/>
            <person name="Herman I."/>
            <person name="Ibrohimov S."/>
            <person name="Abdul-Majeed B.A."/>
            <person name="Imdad M."/>
            <person name="Isrofilov M."/>
            <person name="Kaiyal Q."/>
            <person name="Khan S."/>
            <person name="Kirmse B."/>
            <person name="Koster J."/>
            <person name="Lourenco C.M."/>
            <person name="Mitani T."/>
            <person name="Moldovan O."/>
            <person name="Murphy D."/>
            <person name="Najafi M."/>
            <person name="Pehlivan D."/>
            <person name="Rocha M.E."/>
            <person name="Salpietro V."/>
            <person name="Schmidts M."/>
            <person name="Shalata A."/>
            <person name="Mahroum M."/>
            <person name="Talbeya J.K."/>
            <person name="Taylor R.W."/>
            <person name="Vazquez D."/>
            <person name="Vetro A."/>
            <person name="Waterham H.R."/>
            <person name="Zaman M."/>
            <person name="Schrader T.A."/>
            <person name="Chung W.K."/>
            <person name="Guerrini R."/>
            <person name="Lupski J.R."/>
            <person name="Gleeson J."/>
            <person name="Suri M."/>
            <person name="Jamshidi Y."/>
            <person name="Bhatia K.P."/>
            <person name="Vona B."/>
            <person name="Schrader M."/>
            <person name="Severino M."/>
            <person name="Guille M."/>
            <person name="Tate E.W."/>
            <person name="Varshney G.K."/>
            <person name="Houlden H."/>
            <person name="Maroofian R."/>
        </authorList>
    </citation>
    <scope>DISRUPTION PHENOTYPE</scope>
    <scope>FUNCTION</scope>
</reference>
<name>ACBD6_XENTR</name>
<keyword id="KW-0040">ANK repeat</keyword>
<keyword id="KW-0963">Cytoplasm</keyword>
<keyword id="KW-0446">Lipid-binding</keyword>
<keyword id="KW-0539">Nucleus</keyword>
<keyword id="KW-1185">Reference proteome</keyword>
<keyword id="KW-0677">Repeat</keyword>
<protein>
    <recommendedName>
        <fullName>Acyl-CoA-binding domain-containing protein 6</fullName>
    </recommendedName>
</protein>
<comment type="function">
    <text evidence="5">Binds long-chain acyl-coenzyme A molecules with a strong preference for unsaturated C18:1-CoA. Does not bind fatty acids. Plays a role in protein N-myristoylation (PubMed:37951597).</text>
</comment>
<comment type="subcellular location">
    <subcellularLocation>
        <location evidence="2">Cytoplasm</location>
    </subcellularLocation>
    <subcellularLocation>
        <location evidence="2">Nucleus</location>
    </subcellularLocation>
</comment>
<comment type="disruption phenotype">
    <text evidence="5">CRISP-Cas-mediated knockout results in gastrulation failure due to reduced cell movements. Animals surviving to free-feeding stages have craniofacial abnormalities, decreased head size, structural brain abnormalities, eye abnormalities, and decreased movement. Proteomics analysis shows decreased protein N-myristoylation.</text>
</comment>
<organism>
    <name type="scientific">Xenopus tropicalis</name>
    <name type="common">Western clawed frog</name>
    <name type="synonym">Silurana tropicalis</name>
    <dbReference type="NCBI Taxonomy" id="8364"/>
    <lineage>
        <taxon>Eukaryota</taxon>
        <taxon>Metazoa</taxon>
        <taxon>Chordata</taxon>
        <taxon>Craniata</taxon>
        <taxon>Vertebrata</taxon>
        <taxon>Euteleostomi</taxon>
        <taxon>Amphibia</taxon>
        <taxon>Batrachia</taxon>
        <taxon>Anura</taxon>
        <taxon>Pipoidea</taxon>
        <taxon>Pipidae</taxon>
        <taxon>Xenopodinae</taxon>
        <taxon>Xenopus</taxon>
        <taxon>Silurana</taxon>
    </lineage>
</organism>
<dbReference type="EMBL" id="BC080953">
    <property type="protein sequence ID" value="AAH80953.1"/>
    <property type="molecule type" value="mRNA"/>
</dbReference>
<dbReference type="SMR" id="Q66JD7"/>
<dbReference type="FunCoup" id="Q66JD7">
    <property type="interactions" value="1368"/>
</dbReference>
<dbReference type="STRING" id="8364.ENSXETP00000042856"/>
<dbReference type="PaxDb" id="8364-ENSXETP00000050059"/>
<dbReference type="eggNOG" id="KOG0817">
    <property type="taxonomic scope" value="Eukaryota"/>
</dbReference>
<dbReference type="InParanoid" id="Q66JD7"/>
<dbReference type="Proteomes" id="UP000008143">
    <property type="component" value="Unplaced"/>
</dbReference>
<dbReference type="Bgee" id="ENSXETG00000023141">
    <property type="expression patterns" value="Expressed in early embryo and 13 other cell types or tissues"/>
</dbReference>
<dbReference type="GO" id="GO:0005737">
    <property type="term" value="C:cytoplasm"/>
    <property type="evidence" value="ECO:0000250"/>
    <property type="project" value="UniProtKB"/>
</dbReference>
<dbReference type="GO" id="GO:0005634">
    <property type="term" value="C:nucleus"/>
    <property type="evidence" value="ECO:0000250"/>
    <property type="project" value="UniProtKB"/>
</dbReference>
<dbReference type="GO" id="GO:0000062">
    <property type="term" value="F:fatty-acyl-CoA binding"/>
    <property type="evidence" value="ECO:0000250"/>
    <property type="project" value="UniProtKB"/>
</dbReference>
<dbReference type="GO" id="GO:0008289">
    <property type="term" value="F:lipid binding"/>
    <property type="evidence" value="ECO:0000250"/>
    <property type="project" value="UniProtKB"/>
</dbReference>
<dbReference type="FunFam" id="1.20.80.10:FF:000022">
    <property type="entry name" value="acyl-CoA-binding domain-containing protein 6 isoform X1"/>
    <property type="match status" value="1"/>
</dbReference>
<dbReference type="Gene3D" id="1.20.80.10">
    <property type="match status" value="1"/>
</dbReference>
<dbReference type="Gene3D" id="1.25.40.20">
    <property type="entry name" value="Ankyrin repeat-containing domain"/>
    <property type="match status" value="2"/>
</dbReference>
<dbReference type="InterPro" id="IPR000582">
    <property type="entry name" value="Acyl-CoA-binding_protein"/>
</dbReference>
<dbReference type="InterPro" id="IPR035984">
    <property type="entry name" value="Acyl-CoA-binding_sf"/>
</dbReference>
<dbReference type="InterPro" id="IPR002110">
    <property type="entry name" value="Ankyrin_rpt"/>
</dbReference>
<dbReference type="InterPro" id="IPR036770">
    <property type="entry name" value="Ankyrin_rpt-contain_sf"/>
</dbReference>
<dbReference type="InterPro" id="IPR014352">
    <property type="entry name" value="FERM/acyl-CoA-bd_prot_sf"/>
</dbReference>
<dbReference type="PANTHER" id="PTHR24119">
    <property type="entry name" value="ACYL-COA-BINDING DOMAIN-CONTAINING PROTEIN 6"/>
    <property type="match status" value="1"/>
</dbReference>
<dbReference type="PANTHER" id="PTHR24119:SF0">
    <property type="entry name" value="ACYL-COA-BINDING DOMAIN-CONTAINING PROTEIN 6"/>
    <property type="match status" value="1"/>
</dbReference>
<dbReference type="Pfam" id="PF00887">
    <property type="entry name" value="ACBP"/>
    <property type="match status" value="1"/>
</dbReference>
<dbReference type="Pfam" id="PF12796">
    <property type="entry name" value="Ank_2"/>
    <property type="match status" value="1"/>
</dbReference>
<dbReference type="PRINTS" id="PR00689">
    <property type="entry name" value="ACOABINDINGP"/>
</dbReference>
<dbReference type="PRINTS" id="PR01415">
    <property type="entry name" value="ANKYRIN"/>
</dbReference>
<dbReference type="SMART" id="SM00248">
    <property type="entry name" value="ANK"/>
    <property type="match status" value="3"/>
</dbReference>
<dbReference type="SUPFAM" id="SSF47027">
    <property type="entry name" value="Acyl-CoA binding protein"/>
    <property type="match status" value="1"/>
</dbReference>
<dbReference type="SUPFAM" id="SSF48403">
    <property type="entry name" value="Ankyrin repeat"/>
    <property type="match status" value="1"/>
</dbReference>
<dbReference type="PROSITE" id="PS51228">
    <property type="entry name" value="ACB_2"/>
    <property type="match status" value="1"/>
</dbReference>
<dbReference type="PROSITE" id="PS50297">
    <property type="entry name" value="ANK_REP_REGION"/>
    <property type="match status" value="1"/>
</dbReference>
<dbReference type="PROSITE" id="PS50088">
    <property type="entry name" value="ANK_REPEAT"/>
    <property type="match status" value="2"/>
</dbReference>